<sequence length="287" mass="30474">MAKDVEAVPGEGFQTRDYQDPPPAPFIDGAELKKWSFYRAVIAEFVATLLFLYITVLTVIGYKIQSDTDAGGVDCGGVGILGIAWAFGGMIFILVYCTAGISGGHINPAVTFGLFLARKVSLPRALLYIIAQCLGAICGVGFVKAFQSSYYTRYGGGANSLADGYSTGTGLAAEIIGTFVLVYTVFSATDPKRSARDSHVPVLAPLPIGFAVFMVHLATIPITGTGINPARSFGAAVIYNKSKPWDDHWIFWVGPFIGAAIAAFYHQFVLRASGSKSLGSFRSAANV</sequence>
<name>PIP21_ARATH</name>
<keyword id="KW-0007">Acetylation</keyword>
<keyword id="KW-1003">Cell membrane</keyword>
<keyword id="KW-0472">Membrane</keyword>
<keyword id="KW-0488">Methylation</keyword>
<keyword id="KW-0597">Phosphoprotein</keyword>
<keyword id="KW-1185">Reference proteome</keyword>
<keyword id="KW-0677">Repeat</keyword>
<keyword id="KW-0812">Transmembrane</keyword>
<keyword id="KW-1133">Transmembrane helix</keyword>
<keyword id="KW-0813">Transport</keyword>
<keyword id="KW-0832">Ubl conjugation</keyword>
<feature type="chain" id="PRO_0000425766" description="Aquaporin PIP2-1">
    <location>
        <begin position="1"/>
        <end position="287"/>
    </location>
</feature>
<feature type="topological domain" description="Cytoplasmic" evidence="2">
    <location>
        <begin position="2"/>
        <end position="39"/>
    </location>
</feature>
<feature type="transmembrane region" description="Helical; Name=1" evidence="2">
    <location>
        <begin position="40"/>
        <end position="60"/>
    </location>
</feature>
<feature type="topological domain" description="Extracellular" evidence="2">
    <location>
        <begin position="61"/>
        <end position="83"/>
    </location>
</feature>
<feature type="transmembrane region" description="Helical; Name=2" evidence="2">
    <location>
        <begin position="84"/>
        <end position="104"/>
    </location>
</feature>
<feature type="topological domain" description="Cytoplasmic" evidence="2">
    <location>
        <begin position="105"/>
        <end position="125"/>
    </location>
</feature>
<feature type="transmembrane region" description="Helical; Name=3" evidence="2">
    <location>
        <begin position="126"/>
        <end position="146"/>
    </location>
</feature>
<feature type="topological domain" description="Extracellular" evidence="2">
    <location>
        <begin position="147"/>
        <end position="167"/>
    </location>
</feature>
<feature type="transmembrane region" description="Helical; Name=4" evidence="2">
    <location>
        <begin position="168"/>
        <end position="188"/>
    </location>
</feature>
<feature type="topological domain" description="Cytoplasmic" evidence="2">
    <location>
        <begin position="189"/>
        <end position="201"/>
    </location>
</feature>
<feature type="transmembrane region" description="Helical; Name=5" evidence="2">
    <location>
        <begin position="202"/>
        <end position="222"/>
    </location>
</feature>
<feature type="topological domain" description="Extracellular" evidence="2">
    <location>
        <begin position="223"/>
        <end position="249"/>
    </location>
</feature>
<feature type="transmembrane region" description="Helical; Name=6" evidence="2">
    <location>
        <begin position="250"/>
        <end position="270"/>
    </location>
</feature>
<feature type="topological domain" description="Cytoplasmic" evidence="2">
    <location>
        <begin position="271"/>
        <end position="287"/>
    </location>
</feature>
<feature type="short sequence motif" description="NPA 1">
    <location>
        <begin position="107"/>
        <end position="109"/>
    </location>
</feature>
<feature type="short sequence motif" description="NPA 2">
    <location>
        <begin position="228"/>
        <end position="230"/>
    </location>
</feature>
<feature type="modified residue" description="N-acetylmethionine" evidence="1">
    <location>
        <position position="1"/>
    </location>
</feature>
<feature type="modified residue" description="N6,N6-dimethyllysine; partial" evidence="6">
    <location>
        <position position="3"/>
    </location>
</feature>
<feature type="modified residue" description="Phosphoserine" evidence="7">
    <location>
        <position position="280"/>
    </location>
</feature>
<feature type="modified residue" description="Phosphoserine" evidence="7">
    <location>
        <position position="283"/>
    </location>
</feature>
<feature type="mutagenesis site" description="2-fold decrease in water transport activity." evidence="6">
    <original>K</original>
    <variation>A</variation>
    <location>
        <position position="3"/>
    </location>
</feature>
<feature type="mutagenesis site" description="No effect." evidence="6">
    <original>K</original>
    <variation>R</variation>
    <location>
        <position position="3"/>
    </location>
</feature>
<feature type="mutagenesis site" description="No effect." evidence="6">
    <original>E</original>
    <variation>A</variation>
    <location>
        <position position="6"/>
    </location>
</feature>
<feature type="mutagenesis site" description="Normal subcellular localization." evidence="7">
    <original>S</original>
    <variation>A</variation>
    <location>
        <position position="280"/>
    </location>
</feature>
<feature type="mutagenesis site" description="Intracellular reticulation pattern, probably corresponding to the endoplasmic reticulum." evidence="7">
    <original>S</original>
    <variation>A</variation>
    <location>
        <position position="283"/>
    </location>
</feature>
<feature type="mutagenesis site" description="Normal subcellular localization." evidence="7">
    <original>S</original>
    <variation>D</variation>
    <location>
        <position position="283"/>
    </location>
</feature>
<evidence type="ECO:0000250" key="1">
    <source>
        <dbReference type="UniProtKB" id="P61837"/>
    </source>
</evidence>
<evidence type="ECO:0000255" key="2"/>
<evidence type="ECO:0000269" key="3">
    <source>
    </source>
</evidence>
<evidence type="ECO:0000269" key="4">
    <source>
    </source>
</evidence>
<evidence type="ECO:0000269" key="5">
    <source>
    </source>
</evidence>
<evidence type="ECO:0000269" key="6">
    <source>
    </source>
</evidence>
<evidence type="ECO:0000269" key="7">
    <source>
    </source>
</evidence>
<evidence type="ECO:0000269" key="8">
    <source>
    </source>
</evidence>
<evidence type="ECO:0000269" key="9">
    <source>
    </source>
</evidence>
<evidence type="ECO:0000305" key="10"/>
<protein>
    <recommendedName>
        <fullName>Aquaporin PIP2-1</fullName>
    </recommendedName>
    <alternativeName>
        <fullName>Plasma membrane intrinsic protein 2-1</fullName>
        <shortName>AtPIP2;1</shortName>
    </alternativeName>
    <alternativeName>
        <fullName>Plasma membrane intrinsic protein 2a</fullName>
        <shortName>PIP2a</shortName>
    </alternativeName>
</protein>
<gene>
    <name type="primary">PIP2-1</name>
    <name type="synonym">PIP2A</name>
    <name type="ordered locus">At3g53420</name>
    <name type="ORF">F4P12.120</name>
</gene>
<dbReference type="EMBL" id="X75883">
    <property type="protein sequence ID" value="CAA53477.1"/>
    <property type="molecule type" value="mRNA"/>
</dbReference>
<dbReference type="EMBL" id="AL132966">
    <property type="protein sequence ID" value="CAB67649.1"/>
    <property type="molecule type" value="Genomic_DNA"/>
</dbReference>
<dbReference type="EMBL" id="CP002686">
    <property type="protein sequence ID" value="AEE79083.1"/>
    <property type="molecule type" value="Genomic_DNA"/>
</dbReference>
<dbReference type="EMBL" id="CP002686">
    <property type="protein sequence ID" value="AEE79084.1"/>
    <property type="molecule type" value="Genomic_DNA"/>
</dbReference>
<dbReference type="EMBL" id="AY039579">
    <property type="protein sequence ID" value="AAK62634.1"/>
    <property type="molecule type" value="mRNA"/>
</dbReference>
<dbReference type="EMBL" id="AY044327">
    <property type="protein sequence ID" value="AAK73268.1"/>
    <property type="molecule type" value="mRNA"/>
</dbReference>
<dbReference type="EMBL" id="AY056085">
    <property type="protein sequence ID" value="AAL06973.1"/>
    <property type="molecule type" value="mRNA"/>
</dbReference>
<dbReference type="EMBL" id="AF428426">
    <property type="protein sequence ID" value="AAL16195.1"/>
    <property type="molecule type" value="mRNA"/>
</dbReference>
<dbReference type="EMBL" id="AY072374">
    <property type="protein sequence ID" value="AAL62366.1"/>
    <property type="molecule type" value="mRNA"/>
</dbReference>
<dbReference type="EMBL" id="AY087854">
    <property type="protein sequence ID" value="AAM65406.1"/>
    <property type="molecule type" value="mRNA"/>
</dbReference>
<dbReference type="PIR" id="S44084">
    <property type="entry name" value="S44084"/>
</dbReference>
<dbReference type="RefSeq" id="NP_001030851.1">
    <property type="nucleotide sequence ID" value="NM_001035774.1"/>
</dbReference>
<dbReference type="RefSeq" id="NP_190910.1">
    <property type="nucleotide sequence ID" value="NM_115202.3"/>
</dbReference>
<dbReference type="SMR" id="P43286"/>
<dbReference type="BioGRID" id="9827">
    <property type="interactions" value="306"/>
</dbReference>
<dbReference type="FunCoup" id="P43286">
    <property type="interactions" value="243"/>
</dbReference>
<dbReference type="IntAct" id="P43286">
    <property type="interactions" value="4"/>
</dbReference>
<dbReference type="MINT" id="P43286"/>
<dbReference type="STRING" id="3702.P43286"/>
<dbReference type="TCDB" id="1.A.8.11.4">
    <property type="family name" value="the major intrinsic protein (mip) family"/>
</dbReference>
<dbReference type="iPTMnet" id="P43286"/>
<dbReference type="PaxDb" id="3702-AT3G53420.1"/>
<dbReference type="ProteomicsDB" id="234961"/>
<dbReference type="EnsemblPlants" id="AT3G53420.1">
    <property type="protein sequence ID" value="AT3G53420.1"/>
    <property type="gene ID" value="AT3G53420"/>
</dbReference>
<dbReference type="EnsemblPlants" id="AT3G53420.2">
    <property type="protein sequence ID" value="AT3G53420.2"/>
    <property type="gene ID" value="AT3G53420"/>
</dbReference>
<dbReference type="GeneID" id="824510"/>
<dbReference type="Gramene" id="AT3G53420.1">
    <property type="protein sequence ID" value="AT3G53420.1"/>
    <property type="gene ID" value="AT3G53420"/>
</dbReference>
<dbReference type="Gramene" id="AT3G53420.2">
    <property type="protein sequence ID" value="AT3G53420.2"/>
    <property type="gene ID" value="AT3G53420"/>
</dbReference>
<dbReference type="KEGG" id="ath:AT3G53420"/>
<dbReference type="Araport" id="AT3G53420"/>
<dbReference type="TAIR" id="AT3G53420">
    <property type="gene designation" value="PIP2A"/>
</dbReference>
<dbReference type="eggNOG" id="KOG0223">
    <property type="taxonomic scope" value="Eukaryota"/>
</dbReference>
<dbReference type="HOGENOM" id="CLU_020019_3_0_1"/>
<dbReference type="InParanoid" id="P43286"/>
<dbReference type="OMA" id="IVACHIG"/>
<dbReference type="OrthoDB" id="3222at2759"/>
<dbReference type="PhylomeDB" id="P43286"/>
<dbReference type="PRO" id="PR:P43286"/>
<dbReference type="Proteomes" id="UP000006548">
    <property type="component" value="Chromosome 3"/>
</dbReference>
<dbReference type="ExpressionAtlas" id="P43286">
    <property type="expression patterns" value="baseline and differential"/>
</dbReference>
<dbReference type="GO" id="GO:0000325">
    <property type="term" value="C:plant-type vacuole"/>
    <property type="evidence" value="ECO:0007005"/>
    <property type="project" value="TAIR"/>
</dbReference>
<dbReference type="GO" id="GO:0005886">
    <property type="term" value="C:plasma membrane"/>
    <property type="evidence" value="ECO:0000314"/>
    <property type="project" value="TAIR"/>
</dbReference>
<dbReference type="GO" id="GO:0009506">
    <property type="term" value="C:plasmodesma"/>
    <property type="evidence" value="ECO:0007005"/>
    <property type="project" value="TAIR"/>
</dbReference>
<dbReference type="GO" id="GO:0003729">
    <property type="term" value="F:mRNA binding"/>
    <property type="evidence" value="ECO:0007005"/>
    <property type="project" value="TAIR"/>
</dbReference>
<dbReference type="GO" id="GO:0031625">
    <property type="term" value="F:ubiquitin protein ligase binding"/>
    <property type="evidence" value="ECO:0000353"/>
    <property type="project" value="UniProtKB"/>
</dbReference>
<dbReference type="GO" id="GO:0015250">
    <property type="term" value="F:water channel activity"/>
    <property type="evidence" value="ECO:0000314"/>
    <property type="project" value="TAIR"/>
</dbReference>
<dbReference type="GO" id="GO:0080170">
    <property type="term" value="P:hydrogen peroxide transmembrane transport"/>
    <property type="evidence" value="ECO:0000314"/>
    <property type="project" value="TAIR"/>
</dbReference>
<dbReference type="GO" id="GO:0009414">
    <property type="term" value="P:response to water deprivation"/>
    <property type="evidence" value="ECO:0000270"/>
    <property type="project" value="TAIR"/>
</dbReference>
<dbReference type="GO" id="GO:0006833">
    <property type="term" value="P:water transport"/>
    <property type="evidence" value="ECO:0000314"/>
    <property type="project" value="TAIR"/>
</dbReference>
<dbReference type="CDD" id="cd00333">
    <property type="entry name" value="MIP"/>
    <property type="match status" value="1"/>
</dbReference>
<dbReference type="FunFam" id="1.20.1080.10:FF:000001">
    <property type="entry name" value="Probable aquaporin PIP1-2"/>
    <property type="match status" value="1"/>
</dbReference>
<dbReference type="Gene3D" id="1.20.1080.10">
    <property type="entry name" value="Glycerol uptake facilitator protein"/>
    <property type="match status" value="1"/>
</dbReference>
<dbReference type="InterPro" id="IPR023271">
    <property type="entry name" value="Aquaporin-like"/>
</dbReference>
<dbReference type="InterPro" id="IPR034294">
    <property type="entry name" value="Aquaporin_transptr"/>
</dbReference>
<dbReference type="InterPro" id="IPR000425">
    <property type="entry name" value="MIP"/>
</dbReference>
<dbReference type="InterPro" id="IPR022357">
    <property type="entry name" value="MIP_CS"/>
</dbReference>
<dbReference type="NCBIfam" id="TIGR00861">
    <property type="entry name" value="MIP"/>
    <property type="match status" value="1"/>
</dbReference>
<dbReference type="PANTHER" id="PTHR45687">
    <property type="entry name" value="AQUAPORIN OR AQUAGLYCEROPORIN RELATED"/>
    <property type="match status" value="1"/>
</dbReference>
<dbReference type="Pfam" id="PF00230">
    <property type="entry name" value="MIP"/>
    <property type="match status" value="1"/>
</dbReference>
<dbReference type="PRINTS" id="PR00783">
    <property type="entry name" value="MINTRINSICP"/>
</dbReference>
<dbReference type="SUPFAM" id="SSF81338">
    <property type="entry name" value="Aquaporin-like"/>
    <property type="match status" value="1"/>
</dbReference>
<dbReference type="PROSITE" id="PS00221">
    <property type="entry name" value="MIP"/>
    <property type="match status" value="1"/>
</dbReference>
<organism>
    <name type="scientific">Arabidopsis thaliana</name>
    <name type="common">Mouse-ear cress</name>
    <dbReference type="NCBI Taxonomy" id="3702"/>
    <lineage>
        <taxon>Eukaryota</taxon>
        <taxon>Viridiplantae</taxon>
        <taxon>Streptophyta</taxon>
        <taxon>Embryophyta</taxon>
        <taxon>Tracheophyta</taxon>
        <taxon>Spermatophyta</taxon>
        <taxon>Magnoliopsida</taxon>
        <taxon>eudicotyledons</taxon>
        <taxon>Gunneridae</taxon>
        <taxon>Pentapetalae</taxon>
        <taxon>rosids</taxon>
        <taxon>malvids</taxon>
        <taxon>Brassicales</taxon>
        <taxon>Brassicaceae</taxon>
        <taxon>Camelineae</taxon>
        <taxon>Arabidopsis</taxon>
    </lineage>
</organism>
<comment type="function">
    <text evidence="9">Water channel required to facilitate the transport of water across cell membrane. Probably involved in root water uptake. Its function is impaired by Hg(2+).</text>
</comment>
<comment type="subcellular location">
    <subcellularLocation>
        <location evidence="3 5 7">Cell membrane</location>
        <topology evidence="3 7">Multi-pass membrane protein</topology>
    </subcellularLocation>
    <text>A fuzzy intracellular localization is induced by salt (NaCl) treatment.</text>
</comment>
<comment type="tissue specificity">
    <text evidence="4 9">Predominantly expressed in roots and green siliques. Also expressed at lower level above ground and in flower buds.</text>
</comment>
<comment type="domain">
    <text>Aquaporins contain two tandem repeats each containing three membrane-spanning domains and a pore-forming loop with the signature motif Asn-Pro-Ala (NPA).</text>
</comment>
<comment type="PTM">
    <text evidence="8">Ubiquitinated by RMA1, leading to proteasomal degradation.</text>
</comment>
<comment type="PTM">
    <text evidence="7">The phosphorylation at Ser-280 and Ser-283 is altered by salt (NaCl) and hydrogen peroxide H(2)O(2) treatments. Phosphorylation of Ser-283 is required for plasma membrane targeting.</text>
</comment>
<comment type="similarity">
    <text evidence="10">Belongs to the MIP/aquaporin (TC 1.A.8) family. PIP (TC 1.A.8.11) subfamily.</text>
</comment>
<accession>P43286</accession>
<proteinExistence type="evidence at protein level"/>
<reference key="1">
    <citation type="journal article" date="1994" name="Plant J.">
        <title>Water channels in the plant plasma membrane cloned by immunoselection from a mammalian expression system.</title>
        <authorList>
            <person name="Kammerloher W."/>
            <person name="Fischer U."/>
            <person name="Piechottka G.P."/>
            <person name="Schaeffner A.R."/>
        </authorList>
    </citation>
    <scope>NUCLEOTIDE SEQUENCE [MRNA]</scope>
    <scope>FUNCTION</scope>
    <scope>TISSUE SPECIFICITY</scope>
    <source>
        <strain>cv. Landsberg erecta</strain>
        <tissue>Root</tissue>
    </source>
</reference>
<reference key="2">
    <citation type="journal article" date="2000" name="Nature">
        <title>Sequence and analysis of chromosome 3 of the plant Arabidopsis thaliana.</title>
        <authorList>
            <person name="Salanoubat M."/>
            <person name="Lemcke K."/>
            <person name="Rieger M."/>
            <person name="Ansorge W."/>
            <person name="Unseld M."/>
            <person name="Fartmann B."/>
            <person name="Valle G."/>
            <person name="Bloecker H."/>
            <person name="Perez-Alonso M."/>
            <person name="Obermaier B."/>
            <person name="Delseny M."/>
            <person name="Boutry M."/>
            <person name="Grivell L.A."/>
            <person name="Mache R."/>
            <person name="Puigdomenech P."/>
            <person name="De Simone V."/>
            <person name="Choisne N."/>
            <person name="Artiguenave F."/>
            <person name="Robert C."/>
            <person name="Brottier P."/>
            <person name="Wincker P."/>
            <person name="Cattolico L."/>
            <person name="Weissenbach J."/>
            <person name="Saurin W."/>
            <person name="Quetier F."/>
            <person name="Schaefer M."/>
            <person name="Mueller-Auer S."/>
            <person name="Gabel C."/>
            <person name="Fuchs M."/>
            <person name="Benes V."/>
            <person name="Wurmbach E."/>
            <person name="Drzonek H."/>
            <person name="Erfle H."/>
            <person name="Jordan N."/>
            <person name="Bangert S."/>
            <person name="Wiedelmann R."/>
            <person name="Kranz H."/>
            <person name="Voss H."/>
            <person name="Holland R."/>
            <person name="Brandt P."/>
            <person name="Nyakatura G."/>
            <person name="Vezzi A."/>
            <person name="D'Angelo M."/>
            <person name="Pallavicini A."/>
            <person name="Toppo S."/>
            <person name="Simionati B."/>
            <person name="Conrad A."/>
            <person name="Hornischer K."/>
            <person name="Kauer G."/>
            <person name="Loehnert T.-H."/>
            <person name="Nordsiek G."/>
            <person name="Reichelt J."/>
            <person name="Scharfe M."/>
            <person name="Schoen O."/>
            <person name="Bargues M."/>
            <person name="Terol J."/>
            <person name="Climent J."/>
            <person name="Navarro P."/>
            <person name="Collado C."/>
            <person name="Perez-Perez A."/>
            <person name="Ottenwaelder B."/>
            <person name="Duchemin D."/>
            <person name="Cooke R."/>
            <person name="Laudie M."/>
            <person name="Berger-Llauro C."/>
            <person name="Purnelle B."/>
            <person name="Masuy D."/>
            <person name="de Haan M."/>
            <person name="Maarse A.C."/>
            <person name="Alcaraz J.-P."/>
            <person name="Cottet A."/>
            <person name="Casacuberta E."/>
            <person name="Monfort A."/>
            <person name="Argiriou A."/>
            <person name="Flores M."/>
            <person name="Liguori R."/>
            <person name="Vitale D."/>
            <person name="Mannhaupt G."/>
            <person name="Haase D."/>
            <person name="Schoof H."/>
            <person name="Rudd S."/>
            <person name="Zaccaria P."/>
            <person name="Mewes H.-W."/>
            <person name="Mayer K.F.X."/>
            <person name="Kaul S."/>
            <person name="Town C.D."/>
            <person name="Koo H.L."/>
            <person name="Tallon L.J."/>
            <person name="Jenkins J."/>
            <person name="Rooney T."/>
            <person name="Rizzo M."/>
            <person name="Walts A."/>
            <person name="Utterback T."/>
            <person name="Fujii C.Y."/>
            <person name="Shea T.P."/>
            <person name="Creasy T.H."/>
            <person name="Haas B."/>
            <person name="Maiti R."/>
            <person name="Wu D."/>
            <person name="Peterson J."/>
            <person name="Van Aken S."/>
            <person name="Pai G."/>
            <person name="Militscher J."/>
            <person name="Sellers P."/>
            <person name="Gill J.E."/>
            <person name="Feldblyum T.V."/>
            <person name="Preuss D."/>
            <person name="Lin X."/>
            <person name="Nierman W.C."/>
            <person name="Salzberg S.L."/>
            <person name="White O."/>
            <person name="Venter J.C."/>
            <person name="Fraser C.M."/>
            <person name="Kaneko T."/>
            <person name="Nakamura Y."/>
            <person name="Sato S."/>
            <person name="Kato T."/>
            <person name="Asamizu E."/>
            <person name="Sasamoto S."/>
            <person name="Kimura T."/>
            <person name="Idesawa K."/>
            <person name="Kawashima K."/>
            <person name="Kishida Y."/>
            <person name="Kiyokawa C."/>
            <person name="Kohara M."/>
            <person name="Matsumoto M."/>
            <person name="Matsuno A."/>
            <person name="Muraki A."/>
            <person name="Nakayama S."/>
            <person name="Nakazaki N."/>
            <person name="Shinpo S."/>
            <person name="Takeuchi C."/>
            <person name="Wada T."/>
            <person name="Watanabe A."/>
            <person name="Yamada M."/>
            <person name="Yasuda M."/>
            <person name="Tabata S."/>
        </authorList>
    </citation>
    <scope>NUCLEOTIDE SEQUENCE [LARGE SCALE GENOMIC DNA]</scope>
    <source>
        <strain>cv. Columbia</strain>
    </source>
</reference>
<reference key="3">
    <citation type="journal article" date="2017" name="Plant J.">
        <title>Araport11: a complete reannotation of the Arabidopsis thaliana reference genome.</title>
        <authorList>
            <person name="Cheng C.Y."/>
            <person name="Krishnakumar V."/>
            <person name="Chan A.P."/>
            <person name="Thibaud-Nissen F."/>
            <person name="Schobel S."/>
            <person name="Town C.D."/>
        </authorList>
    </citation>
    <scope>GENOME REANNOTATION</scope>
    <source>
        <strain>cv. Columbia</strain>
    </source>
</reference>
<reference key="4">
    <citation type="journal article" date="2003" name="Science">
        <title>Empirical analysis of transcriptional activity in the Arabidopsis genome.</title>
        <authorList>
            <person name="Yamada K."/>
            <person name="Lim J."/>
            <person name="Dale J.M."/>
            <person name="Chen H."/>
            <person name="Shinn P."/>
            <person name="Palm C.J."/>
            <person name="Southwick A.M."/>
            <person name="Wu H.C."/>
            <person name="Kim C.J."/>
            <person name="Nguyen M."/>
            <person name="Pham P.K."/>
            <person name="Cheuk R.F."/>
            <person name="Karlin-Newmann G."/>
            <person name="Liu S.X."/>
            <person name="Lam B."/>
            <person name="Sakano H."/>
            <person name="Wu T."/>
            <person name="Yu G."/>
            <person name="Miranda M."/>
            <person name="Quach H.L."/>
            <person name="Tripp M."/>
            <person name="Chang C.H."/>
            <person name="Lee J.M."/>
            <person name="Toriumi M.J."/>
            <person name="Chan M.M."/>
            <person name="Tang C.C."/>
            <person name="Onodera C.S."/>
            <person name="Deng J.M."/>
            <person name="Akiyama K."/>
            <person name="Ansari Y."/>
            <person name="Arakawa T."/>
            <person name="Banh J."/>
            <person name="Banno F."/>
            <person name="Bowser L."/>
            <person name="Brooks S.Y."/>
            <person name="Carninci P."/>
            <person name="Chao Q."/>
            <person name="Choy N."/>
            <person name="Enju A."/>
            <person name="Goldsmith A.D."/>
            <person name="Gurjal M."/>
            <person name="Hansen N.F."/>
            <person name="Hayashizaki Y."/>
            <person name="Johnson-Hopson C."/>
            <person name="Hsuan V.W."/>
            <person name="Iida K."/>
            <person name="Karnes M."/>
            <person name="Khan S."/>
            <person name="Koesema E."/>
            <person name="Ishida J."/>
            <person name="Jiang P.X."/>
            <person name="Jones T."/>
            <person name="Kawai J."/>
            <person name="Kamiya A."/>
            <person name="Meyers C."/>
            <person name="Nakajima M."/>
            <person name="Narusaka M."/>
            <person name="Seki M."/>
            <person name="Sakurai T."/>
            <person name="Satou M."/>
            <person name="Tamse R."/>
            <person name="Vaysberg M."/>
            <person name="Wallender E.K."/>
            <person name="Wong C."/>
            <person name="Yamamura Y."/>
            <person name="Yuan S."/>
            <person name="Shinozaki K."/>
            <person name="Davis R.W."/>
            <person name="Theologis A."/>
            <person name="Ecker J.R."/>
        </authorList>
    </citation>
    <scope>NUCLEOTIDE SEQUENCE [LARGE SCALE MRNA]</scope>
    <source>
        <strain>cv. Columbia</strain>
    </source>
</reference>
<reference key="5">
    <citation type="submission" date="2002-03" db="EMBL/GenBank/DDBJ databases">
        <title>Full-length cDNA from Arabidopsis thaliana.</title>
        <authorList>
            <person name="Brover V.V."/>
            <person name="Troukhan M.E."/>
            <person name="Alexandrov N.A."/>
            <person name="Lu Y.-P."/>
            <person name="Flavell R.B."/>
            <person name="Feldmann K.A."/>
        </authorList>
    </citation>
    <scope>NUCLEOTIDE SEQUENCE [LARGE SCALE MRNA]</scope>
</reference>
<reference key="6">
    <citation type="journal article" date="2003" name="Plant Cell">
        <title>Role of a single aquaporin isoform in root water uptake.</title>
        <authorList>
            <person name="Javot H."/>
            <person name="Lauvergeat V."/>
            <person name="Santoni V."/>
            <person name="Martin-Laurent F."/>
            <person name="Gueclue J."/>
            <person name="Vinh J."/>
            <person name="Heyes J."/>
            <person name="Franck K.I."/>
            <person name="Schaeffner A.R."/>
            <person name="Bouchez D."/>
            <person name="Maurel C."/>
        </authorList>
    </citation>
    <scope>IDENTIFICATION BY MASS SPECTROMETRY</scope>
</reference>
<reference key="7">
    <citation type="journal article" date="2000" name="Proc. Natl. Acad. Sci. U.S.A.">
        <title>Random GFP::cDNA fusions enable visualization of subcellular structures in cells of Arabidopsis at a high frequency.</title>
        <authorList>
            <person name="Cutler S.R."/>
            <person name="Ehrhardt D.W."/>
            <person name="Griffitts J.S."/>
            <person name="Somerville C.R."/>
        </authorList>
    </citation>
    <scope>SUBCELLULAR LOCATION</scope>
</reference>
<reference key="8">
    <citation type="journal article" date="2002" name="Genome Biol.">
        <title>From genome to function: the Arabidopsis aquaporins.</title>
        <authorList>
            <person name="Quigley F."/>
            <person name="Rosenberg J.M."/>
            <person name="Shachar-Hill Y."/>
            <person name="Bohnert H.J."/>
        </authorList>
    </citation>
    <scope>NOMENCLATURE</scope>
    <scope>TISSUE SPECIFICITY</scope>
</reference>
<reference key="9">
    <citation type="journal article" date="2004" name="Mol. Cell. Proteomics">
        <title>Identification of new intrinsic proteins in Arabidopsis plasma membrane proteome.</title>
        <authorList>
            <person name="Marmagne A."/>
            <person name="Rouet M.-A."/>
            <person name="Ferro M."/>
            <person name="Rolland N."/>
            <person name="Alcon C."/>
            <person name="Joyard J."/>
            <person name="Garin J."/>
            <person name="Barbier-Brygoo H."/>
            <person name="Ephritikhine G."/>
        </authorList>
    </citation>
    <scope>IDENTIFICATION BY MASS SPECTROMETRY</scope>
    <scope>SUBCELLULAR LOCATION [LARGE SCALE ANALYSIS]</scope>
</reference>
<reference key="10">
    <citation type="journal article" date="2006" name="Biochem. J.">
        <title>Methylation of aquaporins in plant plasma membrane.</title>
        <authorList>
            <person name="Santoni V."/>
            <person name="Verdoucq L."/>
            <person name="Sommerer N."/>
            <person name="Vinh J."/>
            <person name="Pflieger D."/>
            <person name="Maurel C."/>
        </authorList>
    </citation>
    <scope>METHYLATION AT LYS-3</scope>
    <scope>MUTAGENESIS OF LYS-3 AND GLU-6</scope>
    <scope>IDENTIFICATION BY MASS SPECTROMETRY</scope>
</reference>
<reference key="11">
    <citation type="journal article" date="2008" name="Mol. Cell. Proteomics">
        <title>Multiple phosphorylations in the C-terminal tail of plant plasma membrane aquaporins: role in subcellular trafficking of AtPIP2;1 in response to salt stress.</title>
        <authorList>
            <person name="Prak S."/>
            <person name="Hem S."/>
            <person name="Boudet J."/>
            <person name="Viennois G."/>
            <person name="Sommerer N."/>
            <person name="Rossignol M."/>
            <person name="Maurel C."/>
            <person name="Santoni V."/>
        </authorList>
    </citation>
    <scope>PHOSPHORYLATION AT SER-280 AND SER-283</scope>
    <scope>SUBCELLULAR LOCATION</scope>
    <scope>MUTAGENESIS OF SER-280 AND SER-283</scope>
    <scope>IDENTIFICATION BY MASS SPECTROMETRY</scope>
    <source>
        <strain>cv. Columbia</strain>
    </source>
</reference>
<reference key="12">
    <citation type="journal article" date="2009" name="Plant Cell">
        <title>Drought stress-induced Rma1H1, a RING membrane-anchor E3 ubiquitin ligase homolog, regulates aquaporin levels via ubiquitination in transgenic Arabidopsis plants.</title>
        <authorList>
            <person name="Lee H.K."/>
            <person name="Cho S.K."/>
            <person name="Son O."/>
            <person name="Xu Z."/>
            <person name="Hwang I."/>
            <person name="Kim W.T."/>
        </authorList>
    </citation>
    <scope>UBIQUITINATION BY RMA1</scope>
</reference>